<name>MNX1_MOUSE</name>
<reference key="1">
    <citation type="journal article" date="1999" name="Nat. Genet.">
        <title>Pancreas dorsal lobe agenesis and abnormal islets of Langerhans in Hlxb9-deficient mice.</title>
        <authorList>
            <person name="Harrison K.A."/>
            <person name="Thaler J."/>
            <person name="Pfaff S.L."/>
            <person name="Gu H."/>
            <person name="Kehrl J.H."/>
        </authorList>
    </citation>
    <scope>NUCLEOTIDE SEQUENCE [MRNA]</scope>
    <scope>FUNCTION</scope>
    <scope>SUBCELLULAR LOCATION</scope>
    <scope>TISSUE SPECIFICITY</scope>
    <scope>DEVELOPMENTAL STAGE</scope>
    <scope>DISRUPTION PHENOTYPE</scope>
    <source>
        <strain>Swiss Webster / NIH</strain>
    </source>
</reference>
<reference key="2">
    <citation type="journal article" date="2009" name="PLoS Biol.">
        <title>Lineage-specific biology revealed by a finished genome assembly of the mouse.</title>
        <authorList>
            <person name="Church D.M."/>
            <person name="Goodstadt L."/>
            <person name="Hillier L.W."/>
            <person name="Zody M.C."/>
            <person name="Goldstein S."/>
            <person name="She X."/>
            <person name="Bult C.J."/>
            <person name="Agarwala R."/>
            <person name="Cherry J.L."/>
            <person name="DiCuccio M."/>
            <person name="Hlavina W."/>
            <person name="Kapustin Y."/>
            <person name="Meric P."/>
            <person name="Maglott D."/>
            <person name="Birtle Z."/>
            <person name="Marques A.C."/>
            <person name="Graves T."/>
            <person name="Zhou S."/>
            <person name="Teague B."/>
            <person name="Potamousis K."/>
            <person name="Churas C."/>
            <person name="Place M."/>
            <person name="Herschleb J."/>
            <person name="Runnheim R."/>
            <person name="Forrest D."/>
            <person name="Amos-Landgraf J."/>
            <person name="Schwartz D.C."/>
            <person name="Cheng Z."/>
            <person name="Lindblad-Toh K."/>
            <person name="Eichler E.E."/>
            <person name="Ponting C.P."/>
        </authorList>
    </citation>
    <scope>NUCLEOTIDE SEQUENCE [LARGE SCALE GENOMIC DNA]</scope>
    <source>
        <strain>C57BL/6J</strain>
    </source>
</reference>
<reference key="3">
    <citation type="journal article" date="2008" name="Dev. Cell">
        <title>A regulatory network to segregate the identity of neuronal subtypes.</title>
        <authorList>
            <person name="Lee S."/>
            <person name="Lee B."/>
            <person name="Joshi K."/>
            <person name="Pfaff S.L."/>
            <person name="Lee J.W."/>
            <person name="Lee S.K."/>
        </authorList>
    </citation>
    <scope>FUNCTION</scope>
    <scope>DEVELOPMENTAL STAGE</scope>
    <scope>DISRUPTION PHENOTYPE</scope>
</reference>
<protein>
    <recommendedName>
        <fullName>Motor neuron and pancreas homeobox protein 1</fullName>
    </recommendedName>
    <alternativeName>
        <fullName>Homeobox protein HB9</fullName>
    </alternativeName>
</protein>
<evidence type="ECO:0000250" key="1">
    <source>
        <dbReference type="UniProtKB" id="P50219"/>
    </source>
</evidence>
<evidence type="ECO:0000255" key="2">
    <source>
        <dbReference type="PROSITE-ProRule" id="PRU00108"/>
    </source>
</evidence>
<evidence type="ECO:0000256" key="3">
    <source>
        <dbReference type="SAM" id="MobiDB-lite"/>
    </source>
</evidence>
<evidence type="ECO:0000269" key="4">
    <source>
    </source>
</evidence>
<evidence type="ECO:0000269" key="5">
    <source>
    </source>
</evidence>
<evidence type="ECO:0000305" key="6"/>
<organism>
    <name type="scientific">Mus musculus</name>
    <name type="common">Mouse</name>
    <dbReference type="NCBI Taxonomy" id="10090"/>
    <lineage>
        <taxon>Eukaryota</taxon>
        <taxon>Metazoa</taxon>
        <taxon>Chordata</taxon>
        <taxon>Craniata</taxon>
        <taxon>Vertebrata</taxon>
        <taxon>Euteleostomi</taxon>
        <taxon>Mammalia</taxon>
        <taxon>Eutheria</taxon>
        <taxon>Euarchontoglires</taxon>
        <taxon>Glires</taxon>
        <taxon>Rodentia</taxon>
        <taxon>Myomorpha</taxon>
        <taxon>Muroidea</taxon>
        <taxon>Muridae</taxon>
        <taxon>Murinae</taxon>
        <taxon>Mus</taxon>
        <taxon>Mus</taxon>
    </lineage>
</organism>
<sequence length="404" mass="41331">MEKSKNFRIDALLAVDPPRAASTQSAPLALVTSLATTVSGPGRGGSGGGGTSSGASRSCSPASSEATAAPGDRLRAESPSPPRLLAAHCALLPKPGFLGAGGGGGAAGGPGTPHHHAHPGAAAAAAAAAAAAAAGGLALGLHPGGAQGGAGLPAQAALYGHPVYSYSAAAAAAALAGQHPALSYSYPQVQGAHPAHPADPIKLGASTFQLDQWLRASTAGMILPKMPDFSCEAQSNLLGKCRRPRTAFTSQQLLELEHQFKLNKYLSRPKRFEVATSLMLTETQVKIWFQNRRMKWKRSKKAKEQAAQEAEKQKGGGGGTGKGGSEEKTEEELMGPPVSGDKASGRRLRDLRDSDPDEDEDDEEEDNFPYSNGAGAHAASSDCSSEDDSPPPRLGGPGHQPLPQ</sequence>
<dbReference type="EMBL" id="AF153046">
    <property type="protein sequence ID" value="AAD49613.1"/>
    <property type="molecule type" value="mRNA"/>
</dbReference>
<dbReference type="EMBL" id="AC164700">
    <property type="status" value="NOT_ANNOTATED_CDS"/>
    <property type="molecule type" value="Genomic_DNA"/>
</dbReference>
<dbReference type="CCDS" id="CCDS19150.1"/>
<dbReference type="SMR" id="Q9QZW9"/>
<dbReference type="FunCoup" id="Q9QZW9">
    <property type="interactions" value="1180"/>
</dbReference>
<dbReference type="STRING" id="10090.ENSMUSP00000129503"/>
<dbReference type="iPTMnet" id="Q9QZW9"/>
<dbReference type="PhosphoSitePlus" id="Q9QZW9"/>
<dbReference type="PaxDb" id="10090-ENSMUSP00000129503"/>
<dbReference type="ProteomicsDB" id="252582"/>
<dbReference type="Antibodypedia" id="33173">
    <property type="antibodies" value="217 antibodies from 35 providers"/>
</dbReference>
<dbReference type="AGR" id="MGI:109160"/>
<dbReference type="MGI" id="MGI:109160">
    <property type="gene designation" value="Mnx1"/>
</dbReference>
<dbReference type="VEuPathDB" id="HostDB:ENSMUSG00000001566"/>
<dbReference type="eggNOG" id="KOG0489">
    <property type="taxonomic scope" value="Eukaryota"/>
</dbReference>
<dbReference type="InParanoid" id="Q9QZW9"/>
<dbReference type="OrthoDB" id="6159439at2759"/>
<dbReference type="PRO" id="PR:Q9QZW9"/>
<dbReference type="Proteomes" id="UP000000589">
    <property type="component" value="Chromosome 5"/>
</dbReference>
<dbReference type="RNAct" id="Q9QZW9">
    <property type="molecule type" value="protein"/>
</dbReference>
<dbReference type="Bgee" id="ENSMUSG00000001566">
    <property type="expression patterns" value="Expressed in lumbar subsegment of spinal cord and 40 other cell types or tissues"/>
</dbReference>
<dbReference type="ExpressionAtlas" id="Q9QZW9">
    <property type="expression patterns" value="baseline and differential"/>
</dbReference>
<dbReference type="GO" id="GO:0000785">
    <property type="term" value="C:chromatin"/>
    <property type="evidence" value="ECO:0000314"/>
    <property type="project" value="UniProtKB"/>
</dbReference>
<dbReference type="GO" id="GO:0005634">
    <property type="term" value="C:nucleus"/>
    <property type="evidence" value="ECO:0000314"/>
    <property type="project" value="MGI"/>
</dbReference>
<dbReference type="GO" id="GO:0003677">
    <property type="term" value="F:DNA binding"/>
    <property type="evidence" value="ECO:0007669"/>
    <property type="project" value="UniProtKB-KW"/>
</dbReference>
<dbReference type="GO" id="GO:0000981">
    <property type="term" value="F:DNA-binding transcription factor activity, RNA polymerase II-specific"/>
    <property type="evidence" value="ECO:0007669"/>
    <property type="project" value="InterPro"/>
</dbReference>
<dbReference type="GO" id="GO:0048667">
    <property type="term" value="P:cell morphogenesis involved in neuron differentiation"/>
    <property type="evidence" value="ECO:0000315"/>
    <property type="project" value="MGI"/>
</dbReference>
<dbReference type="GO" id="GO:0021953">
    <property type="term" value="P:central nervous system neuron differentiation"/>
    <property type="evidence" value="ECO:0000315"/>
    <property type="project" value="MGI"/>
</dbReference>
<dbReference type="GO" id="GO:0060539">
    <property type="term" value="P:diaphragm development"/>
    <property type="evidence" value="ECO:0000315"/>
    <property type="project" value="MGI"/>
</dbReference>
<dbReference type="GO" id="GO:0021904">
    <property type="term" value="P:dorsal/ventral neural tube patterning"/>
    <property type="evidence" value="ECO:0000314"/>
    <property type="project" value="MGI"/>
</dbReference>
<dbReference type="GO" id="GO:0031018">
    <property type="term" value="P:endocrine pancreas development"/>
    <property type="evidence" value="ECO:0000315"/>
    <property type="project" value="MGI"/>
</dbReference>
<dbReference type="GO" id="GO:0008045">
    <property type="term" value="P:motor neuron axon guidance"/>
    <property type="evidence" value="ECO:0000315"/>
    <property type="project" value="MGI"/>
</dbReference>
<dbReference type="GO" id="GO:0000122">
    <property type="term" value="P:negative regulation of transcription by RNA polymerase II"/>
    <property type="evidence" value="ECO:0000314"/>
    <property type="project" value="UniProtKB"/>
</dbReference>
<dbReference type="GO" id="GO:0021675">
    <property type="term" value="P:nerve development"/>
    <property type="evidence" value="ECO:0000315"/>
    <property type="project" value="MGI"/>
</dbReference>
<dbReference type="GO" id="GO:0030182">
    <property type="term" value="P:neuron differentiation"/>
    <property type="evidence" value="ECO:0000315"/>
    <property type="project" value="MGI"/>
</dbReference>
<dbReference type="GO" id="GO:0001764">
    <property type="term" value="P:neuron migration"/>
    <property type="evidence" value="ECO:0000315"/>
    <property type="project" value="MGI"/>
</dbReference>
<dbReference type="GO" id="GO:0048812">
    <property type="term" value="P:neuron projection morphogenesis"/>
    <property type="evidence" value="ECO:0000315"/>
    <property type="project" value="MGI"/>
</dbReference>
<dbReference type="GO" id="GO:0031016">
    <property type="term" value="P:pancreas development"/>
    <property type="evidence" value="ECO:0000315"/>
    <property type="project" value="MGI"/>
</dbReference>
<dbReference type="GO" id="GO:0009791">
    <property type="term" value="P:post-embryonic development"/>
    <property type="evidence" value="ECO:0000315"/>
    <property type="project" value="MGI"/>
</dbReference>
<dbReference type="GO" id="GO:0060541">
    <property type="term" value="P:respiratory system development"/>
    <property type="evidence" value="ECO:0000315"/>
    <property type="project" value="MGI"/>
</dbReference>
<dbReference type="GO" id="GO:0021520">
    <property type="term" value="P:spinal cord motor neuron cell fate specification"/>
    <property type="evidence" value="ECO:0000315"/>
    <property type="project" value="UniProtKB"/>
</dbReference>
<dbReference type="CDD" id="cd00086">
    <property type="entry name" value="homeodomain"/>
    <property type="match status" value="1"/>
</dbReference>
<dbReference type="FunFam" id="1.10.10.60:FF:000243">
    <property type="entry name" value="Motor neuron and pancreas homeobox 1"/>
    <property type="match status" value="1"/>
</dbReference>
<dbReference type="Gene3D" id="1.10.10.60">
    <property type="entry name" value="Homeodomain-like"/>
    <property type="match status" value="1"/>
</dbReference>
<dbReference type="InterPro" id="IPR001356">
    <property type="entry name" value="HD"/>
</dbReference>
<dbReference type="InterPro" id="IPR020479">
    <property type="entry name" value="HD_metazoa"/>
</dbReference>
<dbReference type="InterPro" id="IPR017970">
    <property type="entry name" value="Homeobox_CS"/>
</dbReference>
<dbReference type="InterPro" id="IPR009057">
    <property type="entry name" value="Homeodomain-like_sf"/>
</dbReference>
<dbReference type="InterPro" id="IPR042768">
    <property type="entry name" value="MNX1/Ceh-12"/>
</dbReference>
<dbReference type="PANTHER" id="PTHR24335">
    <property type="entry name" value="MOTOR NEURON AND PANCREAS HOMEOBOX PROTEIN"/>
    <property type="match status" value="1"/>
</dbReference>
<dbReference type="PANTHER" id="PTHR24335:SF3">
    <property type="entry name" value="MOTOR NEURON AND PANCREAS HOMEOBOX PROTEIN 1"/>
    <property type="match status" value="1"/>
</dbReference>
<dbReference type="Pfam" id="PF00046">
    <property type="entry name" value="Homeodomain"/>
    <property type="match status" value="1"/>
</dbReference>
<dbReference type="PRINTS" id="PR00024">
    <property type="entry name" value="HOMEOBOX"/>
</dbReference>
<dbReference type="SMART" id="SM00389">
    <property type="entry name" value="HOX"/>
    <property type="match status" value="1"/>
</dbReference>
<dbReference type="SUPFAM" id="SSF46689">
    <property type="entry name" value="Homeodomain-like"/>
    <property type="match status" value="1"/>
</dbReference>
<dbReference type="PROSITE" id="PS00027">
    <property type="entry name" value="HOMEOBOX_1"/>
    <property type="match status" value="1"/>
</dbReference>
<dbReference type="PROSITE" id="PS50071">
    <property type="entry name" value="HOMEOBOX_2"/>
    <property type="match status" value="1"/>
</dbReference>
<gene>
    <name type="primary">Mnx1</name>
    <name type="synonym">Hlxb9</name>
</gene>
<feature type="chain" id="PRO_0000048906" description="Motor neuron and pancreas homeobox protein 1">
    <location>
        <begin position="1"/>
        <end position="404"/>
    </location>
</feature>
<feature type="DNA-binding region" description="Homeobox" evidence="2">
    <location>
        <begin position="241"/>
        <end position="300"/>
    </location>
</feature>
<feature type="region of interest" description="Disordered" evidence="3">
    <location>
        <begin position="36"/>
        <end position="80"/>
    </location>
</feature>
<feature type="region of interest" description="Disordered" evidence="3">
    <location>
        <begin position="299"/>
        <end position="404"/>
    </location>
</feature>
<feature type="compositionally biased region" description="Gly residues" evidence="3">
    <location>
        <begin position="41"/>
        <end position="52"/>
    </location>
</feature>
<feature type="compositionally biased region" description="Low complexity" evidence="3">
    <location>
        <begin position="53"/>
        <end position="64"/>
    </location>
</feature>
<feature type="compositionally biased region" description="Basic and acidic residues" evidence="3">
    <location>
        <begin position="302"/>
        <end position="314"/>
    </location>
</feature>
<feature type="compositionally biased region" description="Basic and acidic residues" evidence="3">
    <location>
        <begin position="343"/>
        <end position="354"/>
    </location>
</feature>
<feature type="compositionally biased region" description="Acidic residues" evidence="3">
    <location>
        <begin position="355"/>
        <end position="367"/>
    </location>
</feature>
<feature type="modified residue" description="N-acetylmethionine" evidence="1">
    <location>
        <position position="1"/>
    </location>
</feature>
<feature type="modified residue" description="Phosphoserine" evidence="1">
    <location>
        <position position="78"/>
    </location>
</feature>
<feature type="modified residue" description="Phosphoserine" evidence="1">
    <location>
        <position position="80"/>
    </location>
</feature>
<feature type="sequence conflict" description="In Ref. 1; AAD49613." evidence="6" ref="1">
    <original>E</original>
    <variation>Q</variation>
    <location>
        <position position="232"/>
    </location>
</feature>
<comment type="function">
    <text evidence="4 5">Transcription factor (PubMed:18539116). Recognizes and binds to the regulatory elements of target genes, such as visual system homeobox CHX10, negatively modulating transcription (PubMed:18539116). Plays a role in establishing motor neuron identity, in concert with LIM domain transcription cofactor LMO4 (PubMed:18539116). Involved in negatively modulating transcription of interneuron genes in motor neurons, acting, at least in part, by blocking interactions of ISL1-LHX3 complexes with regulatory elements (PubMed:18539116). Involved in pancreas development and function; may play a role in pancreatic cell fate specification (PubMed:10471502).</text>
</comment>
<comment type="subcellular location">
    <subcellularLocation>
        <location evidence="2 4">Nucleus</location>
    </subcellularLocation>
</comment>
<comment type="tissue specificity">
    <text evidence="4">Expressed in beta-cells in the islets of Langerhans, but not in the exocrine portion of adult pancreas (at protein level).</text>
</comment>
<comment type="developmental stage">
    <text evidence="4 5">Expressed at 9.5 dpc embryos in the notochord, spinal cord and the epithelium of the fore- and midgut, including in the developing dorsal pancreatic bud (at protein level) (PubMed:10471502). Expressed at 10.5 dpc in both the dorsal and ventral pancreatic buds, declining by 12.5 dpc, but increasing again by 13.5 dpc, and by 17.5 dpc expression becomes restricted to the developing islets of Langerhans (at protein level) (PubMed:10471502). Expressed at 11.5 dpc and 12.5 dpc in developing spinal cord, especially in motor neurons (at protein level) (PubMed:18539116).</text>
</comment>
<comment type="disruption phenotype">
    <text evidence="4 5">Perinatal lethality and dorsal lobe of the pancreas fails to develop (PubMed:10471502). Reduction in the size of the islets of Langerhans, probably as a result of fewer beta-cells (PubMed:10471502). Additional ectopic V2 interneurons (V2-INs) at all axial levels of the spinal cord; phenotype exacerbated in an LMO4 mutant background (PubMed:18539116). Genes typically expressed in V2-INs expressed ectopically in motor neurons (MNs); phenotype exacerbated in an LMO4 mutant background (PubMed:18539116). Abnormal guidance of motor axons in an LMO4 mutant background (PubMed:18539116).</text>
</comment>
<accession>Q9QZW9</accession>
<accession>E9QPC0</accession>
<proteinExistence type="evidence at protein level"/>
<keyword id="KW-0007">Acetylation</keyword>
<keyword id="KW-0217">Developmental protein</keyword>
<keyword id="KW-0238">DNA-binding</keyword>
<keyword id="KW-0371">Homeobox</keyword>
<keyword id="KW-0539">Nucleus</keyword>
<keyword id="KW-0597">Phosphoprotein</keyword>
<keyword id="KW-1185">Reference proteome</keyword>
<keyword id="KW-0804">Transcription</keyword>
<keyword id="KW-0805">Transcription regulation</keyword>